<accession>P01460</accession>
<organism>
    <name type="scientific">Naja annulifera</name>
    <name type="common">Banded Egyptian cobra</name>
    <name type="synonym">Naja haje annulifera</name>
    <dbReference type="NCBI Taxonomy" id="96794"/>
    <lineage>
        <taxon>Eukaryota</taxon>
        <taxon>Metazoa</taxon>
        <taxon>Chordata</taxon>
        <taxon>Craniata</taxon>
        <taxon>Vertebrata</taxon>
        <taxon>Euteleostomi</taxon>
        <taxon>Lepidosauria</taxon>
        <taxon>Squamata</taxon>
        <taxon>Bifurcata</taxon>
        <taxon>Unidentata</taxon>
        <taxon>Episquamata</taxon>
        <taxon>Toxicofera</taxon>
        <taxon>Serpentes</taxon>
        <taxon>Colubroidea</taxon>
        <taxon>Elapidae</taxon>
        <taxon>Elapinae</taxon>
        <taxon>Naja</taxon>
    </lineage>
</organism>
<evidence type="ECO:0000250" key="1">
    <source>
        <dbReference type="UniProtKB" id="P60301"/>
    </source>
</evidence>
<evidence type="ECO:0000250" key="2">
    <source>
        <dbReference type="UniProtKB" id="P60304"/>
    </source>
</evidence>
<evidence type="ECO:0000269" key="3">
    <source>
    </source>
</evidence>
<evidence type="ECO:0000305" key="4"/>
<reference key="1">
    <citation type="journal article" date="1976" name="Hoppe-Seyler's Z. Physiol. Chem.">
        <title>Snake venom toxins. The amino acid sequence of three toxins (CM-2e, CM-4a and CM-) from Naja haje annulifera (Egyptian cobra) venom.</title>
        <authorList>
            <person name="Joubert F.J."/>
        </authorList>
    </citation>
    <scope>PROTEIN SEQUENCE</scope>
    <scope>SUBCELLULAR LOCATION</scope>
    <scope>TOXIC DOSE</scope>
    <source>
        <tissue>Venom</tissue>
    </source>
</reference>
<protein>
    <recommendedName>
        <fullName>Cytotoxin 8</fullName>
    </recommendedName>
    <alternativeName>
        <fullName>Toxin CM-7</fullName>
    </alternativeName>
</protein>
<sequence>LKCHKLVPPFWKTCPEGKNLCYKMYMVSTLTVPVKRGCIDVCPKNSALVKYVCCNTNKCN</sequence>
<name>3SA8_NAJHA</name>
<proteinExistence type="evidence at protein level"/>
<feature type="chain" id="PRO_0000093492" description="Cytotoxin 8" evidence="3">
    <location>
        <begin position="1"/>
        <end position="60"/>
    </location>
</feature>
<feature type="disulfide bond" evidence="1">
    <location>
        <begin position="3"/>
        <end position="21"/>
    </location>
</feature>
<feature type="disulfide bond" evidence="1">
    <location>
        <begin position="14"/>
        <end position="38"/>
    </location>
</feature>
<feature type="disulfide bond" evidence="1">
    <location>
        <begin position="42"/>
        <end position="53"/>
    </location>
</feature>
<feature type="disulfide bond" evidence="1">
    <location>
        <begin position="54"/>
        <end position="59"/>
    </location>
</feature>
<comment type="function">
    <text evidence="1 2">Shows cytolytic activity on many different cells by forming pore in lipid membranes. In vivo, increases heart rate or kills the animal by cardiac arrest. In addition, it binds to heparin with high affinity, interacts with Kv channel-interacting protein 1 (KCNIP1) in a calcium-independent manner, and binds to integrin alpha-V/beta-3 (ITGAV/ITGB3) with moderate affinity.</text>
</comment>
<comment type="subunit">
    <text evidence="1">Monomer in solution; Homodimer and oligomer in the presence of negatively charged lipids forming a pore with a size ranging between 20 and 30 Angstroms.</text>
</comment>
<comment type="subcellular location">
    <subcellularLocation>
        <location evidence="3">Secreted</location>
    </subcellularLocation>
    <subcellularLocation>
        <location evidence="1">Target cell membrane</location>
    </subcellularLocation>
</comment>
<comment type="tissue specificity">
    <text evidence="4">Expressed by the venom gland.</text>
</comment>
<comment type="toxic dose">
    <text evidence="3">LD(50) is 2.6 mg/kg by intravenous injection.</text>
</comment>
<comment type="miscellaneous">
    <text evidence="4">Is classified as a S-type cytotoxin, since a serine residue stands at position 28 (Ser-29 in standard classification).</text>
</comment>
<comment type="similarity">
    <text evidence="4">Belongs to the three-finger toxin family. Short-chain subfamily. Type IA cytotoxin sub-subfamily.</text>
</comment>
<dbReference type="PIR" id="A91669">
    <property type="entry name" value="H3NJ8E"/>
</dbReference>
<dbReference type="SMR" id="P01460"/>
<dbReference type="GO" id="GO:0005576">
    <property type="term" value="C:extracellular region"/>
    <property type="evidence" value="ECO:0007669"/>
    <property type="project" value="UniProtKB-SubCell"/>
</dbReference>
<dbReference type="GO" id="GO:0016020">
    <property type="term" value="C:membrane"/>
    <property type="evidence" value="ECO:0007669"/>
    <property type="project" value="UniProtKB-KW"/>
</dbReference>
<dbReference type="GO" id="GO:0044218">
    <property type="term" value="C:other organism cell membrane"/>
    <property type="evidence" value="ECO:0007669"/>
    <property type="project" value="UniProtKB-KW"/>
</dbReference>
<dbReference type="GO" id="GO:0090729">
    <property type="term" value="F:toxin activity"/>
    <property type="evidence" value="ECO:0007669"/>
    <property type="project" value="UniProtKB-KW"/>
</dbReference>
<dbReference type="GO" id="GO:0031640">
    <property type="term" value="P:killing of cells of another organism"/>
    <property type="evidence" value="ECO:0007669"/>
    <property type="project" value="UniProtKB-KW"/>
</dbReference>
<dbReference type="CDD" id="cd00206">
    <property type="entry name" value="TFP_snake_toxin"/>
    <property type="match status" value="1"/>
</dbReference>
<dbReference type="FunFam" id="2.10.60.10:FF:000024">
    <property type="entry name" value="Cytotoxin 1"/>
    <property type="match status" value="1"/>
</dbReference>
<dbReference type="Gene3D" id="2.10.60.10">
    <property type="entry name" value="CD59"/>
    <property type="match status" value="1"/>
</dbReference>
<dbReference type="InterPro" id="IPR003572">
    <property type="entry name" value="Cytotoxin_Cobra"/>
</dbReference>
<dbReference type="InterPro" id="IPR003571">
    <property type="entry name" value="Snake_3FTx"/>
</dbReference>
<dbReference type="InterPro" id="IPR045860">
    <property type="entry name" value="Snake_toxin-like_sf"/>
</dbReference>
<dbReference type="InterPro" id="IPR018354">
    <property type="entry name" value="Snake_toxin_con_site"/>
</dbReference>
<dbReference type="InterPro" id="IPR054131">
    <property type="entry name" value="Toxin_cobra-type"/>
</dbReference>
<dbReference type="Pfam" id="PF21947">
    <property type="entry name" value="Toxin_cobra-type"/>
    <property type="match status" value="1"/>
</dbReference>
<dbReference type="PRINTS" id="PR00282">
    <property type="entry name" value="CYTOTOXIN"/>
</dbReference>
<dbReference type="SUPFAM" id="SSF57302">
    <property type="entry name" value="Snake toxin-like"/>
    <property type="match status" value="1"/>
</dbReference>
<dbReference type="PROSITE" id="PS00272">
    <property type="entry name" value="SNAKE_TOXIN"/>
    <property type="match status" value="1"/>
</dbReference>
<keyword id="KW-0123">Cardiotoxin</keyword>
<keyword id="KW-0204">Cytolysis</keyword>
<keyword id="KW-0903">Direct protein sequencing</keyword>
<keyword id="KW-1015">Disulfide bond</keyword>
<keyword id="KW-0472">Membrane</keyword>
<keyword id="KW-0964">Secreted</keyword>
<keyword id="KW-1052">Target cell membrane</keyword>
<keyword id="KW-1053">Target membrane</keyword>
<keyword id="KW-0800">Toxin</keyword>